<evidence type="ECO:0000250" key="1"/>
<evidence type="ECO:0000255" key="2">
    <source>
        <dbReference type="HAMAP-Rule" id="MF_00100"/>
    </source>
</evidence>
<evidence type="ECO:0000256" key="3">
    <source>
        <dbReference type="SAM" id="MobiDB-lite"/>
    </source>
</evidence>
<gene>
    <name evidence="2" type="primary">infB</name>
    <name type="ordered locus">Saro_2490</name>
</gene>
<reference key="1">
    <citation type="submission" date="2006-01" db="EMBL/GenBank/DDBJ databases">
        <title>Complete sequence of Novosphingobium aromaticivorans DSM 12444.</title>
        <authorList>
            <consortium name="US DOE Joint Genome Institute"/>
            <person name="Copeland A."/>
            <person name="Lucas S."/>
            <person name="Lapidus A."/>
            <person name="Barry K."/>
            <person name="Detter J.C."/>
            <person name="Glavina T."/>
            <person name="Hammon N."/>
            <person name="Israni S."/>
            <person name="Pitluck S."/>
            <person name="Chain P."/>
            <person name="Malfatti S."/>
            <person name="Shin M."/>
            <person name="Vergez L."/>
            <person name="Schmutz J."/>
            <person name="Larimer F."/>
            <person name="Land M."/>
            <person name="Kyrpides N."/>
            <person name="Ivanova N."/>
            <person name="Fredrickson J."/>
            <person name="Balkwill D."/>
            <person name="Romine M.F."/>
            <person name="Richardson P."/>
        </authorList>
    </citation>
    <scope>NUCLEOTIDE SEQUENCE [LARGE SCALE GENOMIC DNA]</scope>
    <source>
        <strain>ATCC 700278 / DSM 12444 / CCUG 56034 / CIP 105152 / NBRC 16084 / F199</strain>
    </source>
</reference>
<accession>Q2G5E7</accession>
<name>IF2_NOVAD</name>
<sequence>MSDSDKKPTLGRRPLGLKTAVEAGEVKQTFSHGRTNKVVVEVKRRKLMGRPGEAAPTAAPAAAATPAPTPVAPPPPPPPPPPPPSASRETRQEMQVRLLREAEEARLAALEAANRREQEERLRAIEEERRRAEEKARAEAEAAAAPAAPAAPAAPSAAPAAAQSAPEAAPAPVAEPEVARQPEAAPVAATAPAAPKAEEAKPAAPAVPAPRRFTPVAPAAPIKRPELAAKKPAHPQRDRKTEDRRGGKLTVTRALNEDEGARARSLAALKRAREKERRAHFAGQSQPREKQVRDVVVPDAITVQDLANRMAEKAADLVKALFKMGMMVTINQTIDQDTAELLVTEFGHNIQRVSESDADIDTSADVDPEESLKARPPVVTIMGHVDHGKTSLLDALRGTDVVRGEAGGITQHIGAYQIKTKGGDFITFLDTPGHEAFTEMRIRGANVTDIVILVVAGDDGLMPQTIEAINHTKAAGVPMIVAITKADKPEFQPQKIRERLLEHEIIVEAMSGDVQDVEVSAKTGAGLDELIEKILLQAELLELKANPDRSAEATVIEAKLDKGKGPLATVLVNRGTLKVGDILVVGTQSGRVRAMLDDKGRQVKAAGPSLPVEVLGIGGVPMAGDTLTVVESEARAREVAAYRQERATAKRTAQAPASLENMFSALAAKNAVIEYPLVIRADVQGSAEAIVNALNKISTDEIKVRILASGVGAITESDVNLAQASGAPIVGFNVRPNAKARELIERNKVRMKYFDVIYQLTDDIRSEMAGELGPEAIETVVGRAEVKEVFPAGKRDKAAGLLVVEGVIRKGLHARLTRNDVIVSRTTIASLRRFKDDVPEVRAGLECGVLLQDTNDIKAGDQLEVFEVEMRERTL</sequence>
<keyword id="KW-0963">Cytoplasm</keyword>
<keyword id="KW-0342">GTP-binding</keyword>
<keyword id="KW-0396">Initiation factor</keyword>
<keyword id="KW-0547">Nucleotide-binding</keyword>
<keyword id="KW-0648">Protein biosynthesis</keyword>
<keyword id="KW-1185">Reference proteome</keyword>
<organism>
    <name type="scientific">Novosphingobium aromaticivorans (strain ATCC 700278 / DSM 12444 / CCUG 56034 / CIP 105152 / NBRC 16084 / F199)</name>
    <dbReference type="NCBI Taxonomy" id="279238"/>
    <lineage>
        <taxon>Bacteria</taxon>
        <taxon>Pseudomonadati</taxon>
        <taxon>Pseudomonadota</taxon>
        <taxon>Alphaproteobacteria</taxon>
        <taxon>Sphingomonadales</taxon>
        <taxon>Sphingomonadaceae</taxon>
        <taxon>Novosphingobium</taxon>
    </lineage>
</organism>
<feature type="chain" id="PRO_0000335493" description="Translation initiation factor IF-2">
    <location>
        <begin position="1"/>
        <end position="875"/>
    </location>
</feature>
<feature type="domain" description="tr-type G">
    <location>
        <begin position="374"/>
        <end position="544"/>
    </location>
</feature>
<feature type="region of interest" description="Disordered" evidence="3">
    <location>
        <begin position="1"/>
        <end position="20"/>
    </location>
</feature>
<feature type="region of interest" description="Disordered" evidence="3">
    <location>
        <begin position="47"/>
        <end position="102"/>
    </location>
</feature>
<feature type="region of interest" description="Disordered" evidence="3">
    <location>
        <begin position="126"/>
        <end position="246"/>
    </location>
</feature>
<feature type="region of interest" description="G1" evidence="1">
    <location>
        <begin position="383"/>
        <end position="390"/>
    </location>
</feature>
<feature type="region of interest" description="G2" evidence="1">
    <location>
        <begin position="408"/>
        <end position="412"/>
    </location>
</feature>
<feature type="region of interest" description="G3" evidence="1">
    <location>
        <begin position="430"/>
        <end position="433"/>
    </location>
</feature>
<feature type="region of interest" description="G4" evidence="1">
    <location>
        <begin position="484"/>
        <end position="487"/>
    </location>
</feature>
<feature type="region of interest" description="G5" evidence="1">
    <location>
        <begin position="520"/>
        <end position="522"/>
    </location>
</feature>
<feature type="compositionally biased region" description="Low complexity" evidence="3">
    <location>
        <begin position="54"/>
        <end position="66"/>
    </location>
</feature>
<feature type="compositionally biased region" description="Pro residues" evidence="3">
    <location>
        <begin position="67"/>
        <end position="85"/>
    </location>
</feature>
<feature type="compositionally biased region" description="Basic and acidic residues" evidence="3">
    <location>
        <begin position="88"/>
        <end position="102"/>
    </location>
</feature>
<feature type="compositionally biased region" description="Basic and acidic residues" evidence="3">
    <location>
        <begin position="126"/>
        <end position="140"/>
    </location>
</feature>
<feature type="compositionally biased region" description="Low complexity" evidence="3">
    <location>
        <begin position="141"/>
        <end position="195"/>
    </location>
</feature>
<feature type="compositionally biased region" description="Low complexity" evidence="3">
    <location>
        <begin position="202"/>
        <end position="221"/>
    </location>
</feature>
<feature type="compositionally biased region" description="Basic and acidic residues" evidence="3">
    <location>
        <begin position="223"/>
        <end position="246"/>
    </location>
</feature>
<feature type="binding site" evidence="2">
    <location>
        <begin position="383"/>
        <end position="390"/>
    </location>
    <ligand>
        <name>GTP</name>
        <dbReference type="ChEBI" id="CHEBI:37565"/>
    </ligand>
</feature>
<feature type="binding site" evidence="2">
    <location>
        <begin position="430"/>
        <end position="434"/>
    </location>
    <ligand>
        <name>GTP</name>
        <dbReference type="ChEBI" id="CHEBI:37565"/>
    </ligand>
</feature>
<feature type="binding site" evidence="2">
    <location>
        <begin position="484"/>
        <end position="487"/>
    </location>
    <ligand>
        <name>GTP</name>
        <dbReference type="ChEBI" id="CHEBI:37565"/>
    </ligand>
</feature>
<comment type="function">
    <text evidence="2">One of the essential components for the initiation of protein synthesis. Protects formylmethionyl-tRNA from spontaneous hydrolysis and promotes its binding to the 30S ribosomal subunits. Also involved in the hydrolysis of GTP during the formation of the 70S ribosomal complex.</text>
</comment>
<comment type="subcellular location">
    <subcellularLocation>
        <location evidence="2">Cytoplasm</location>
    </subcellularLocation>
</comment>
<comment type="similarity">
    <text evidence="2">Belongs to the TRAFAC class translation factor GTPase superfamily. Classic translation factor GTPase family. IF-2 subfamily.</text>
</comment>
<protein>
    <recommendedName>
        <fullName evidence="2">Translation initiation factor IF-2</fullName>
    </recommendedName>
</protein>
<dbReference type="EMBL" id="CP000248">
    <property type="protein sequence ID" value="ABD26926.1"/>
    <property type="molecule type" value="Genomic_DNA"/>
</dbReference>
<dbReference type="RefSeq" id="WP_011446132.1">
    <property type="nucleotide sequence ID" value="NC_007794.1"/>
</dbReference>
<dbReference type="SMR" id="Q2G5E7"/>
<dbReference type="STRING" id="279238.Saro_2490"/>
<dbReference type="KEGG" id="nar:Saro_2490"/>
<dbReference type="eggNOG" id="COG0532">
    <property type="taxonomic scope" value="Bacteria"/>
</dbReference>
<dbReference type="HOGENOM" id="CLU_006301_10_1_5"/>
<dbReference type="Proteomes" id="UP000009134">
    <property type="component" value="Chromosome"/>
</dbReference>
<dbReference type="GO" id="GO:0005829">
    <property type="term" value="C:cytosol"/>
    <property type="evidence" value="ECO:0007669"/>
    <property type="project" value="TreeGrafter"/>
</dbReference>
<dbReference type="GO" id="GO:0005525">
    <property type="term" value="F:GTP binding"/>
    <property type="evidence" value="ECO:0007669"/>
    <property type="project" value="UniProtKB-KW"/>
</dbReference>
<dbReference type="GO" id="GO:0003924">
    <property type="term" value="F:GTPase activity"/>
    <property type="evidence" value="ECO:0007669"/>
    <property type="project" value="UniProtKB-UniRule"/>
</dbReference>
<dbReference type="GO" id="GO:0003743">
    <property type="term" value="F:translation initiation factor activity"/>
    <property type="evidence" value="ECO:0007669"/>
    <property type="project" value="UniProtKB-UniRule"/>
</dbReference>
<dbReference type="CDD" id="cd01887">
    <property type="entry name" value="IF2_eIF5B"/>
    <property type="match status" value="1"/>
</dbReference>
<dbReference type="CDD" id="cd03702">
    <property type="entry name" value="IF2_mtIF2_II"/>
    <property type="match status" value="1"/>
</dbReference>
<dbReference type="CDD" id="cd03692">
    <property type="entry name" value="mtIF2_IVc"/>
    <property type="match status" value="1"/>
</dbReference>
<dbReference type="FunFam" id="2.40.30.10:FF:000007">
    <property type="entry name" value="Translation initiation factor IF-2"/>
    <property type="match status" value="1"/>
</dbReference>
<dbReference type="FunFam" id="2.40.30.10:FF:000008">
    <property type="entry name" value="Translation initiation factor IF-2"/>
    <property type="match status" value="1"/>
</dbReference>
<dbReference type="FunFam" id="3.40.50.10050:FF:000001">
    <property type="entry name" value="Translation initiation factor IF-2"/>
    <property type="match status" value="1"/>
</dbReference>
<dbReference type="FunFam" id="3.40.50.300:FF:000019">
    <property type="entry name" value="Translation initiation factor IF-2"/>
    <property type="match status" value="1"/>
</dbReference>
<dbReference type="Gene3D" id="3.40.50.300">
    <property type="entry name" value="P-loop containing nucleotide triphosphate hydrolases"/>
    <property type="match status" value="1"/>
</dbReference>
<dbReference type="Gene3D" id="2.40.30.10">
    <property type="entry name" value="Translation factors"/>
    <property type="match status" value="2"/>
</dbReference>
<dbReference type="Gene3D" id="3.40.50.10050">
    <property type="entry name" value="Translation initiation factor IF- 2, domain 3"/>
    <property type="match status" value="1"/>
</dbReference>
<dbReference type="HAMAP" id="MF_00100_B">
    <property type="entry name" value="IF_2_B"/>
    <property type="match status" value="1"/>
</dbReference>
<dbReference type="InterPro" id="IPR053905">
    <property type="entry name" value="EF-G-like_DII"/>
</dbReference>
<dbReference type="InterPro" id="IPR013575">
    <property type="entry name" value="IF2_assoc_dom_bac"/>
</dbReference>
<dbReference type="InterPro" id="IPR044145">
    <property type="entry name" value="IF2_II"/>
</dbReference>
<dbReference type="InterPro" id="IPR006847">
    <property type="entry name" value="IF2_N"/>
</dbReference>
<dbReference type="InterPro" id="IPR027417">
    <property type="entry name" value="P-loop_NTPase"/>
</dbReference>
<dbReference type="InterPro" id="IPR005225">
    <property type="entry name" value="Small_GTP-bd"/>
</dbReference>
<dbReference type="InterPro" id="IPR000795">
    <property type="entry name" value="T_Tr_GTP-bd_dom"/>
</dbReference>
<dbReference type="InterPro" id="IPR000178">
    <property type="entry name" value="TF_IF2_bacterial-like"/>
</dbReference>
<dbReference type="InterPro" id="IPR015760">
    <property type="entry name" value="TIF_IF2"/>
</dbReference>
<dbReference type="InterPro" id="IPR023115">
    <property type="entry name" value="TIF_IF2_dom3"/>
</dbReference>
<dbReference type="InterPro" id="IPR036925">
    <property type="entry name" value="TIF_IF2_dom3_sf"/>
</dbReference>
<dbReference type="InterPro" id="IPR009000">
    <property type="entry name" value="Transl_B-barrel_sf"/>
</dbReference>
<dbReference type="NCBIfam" id="TIGR00487">
    <property type="entry name" value="IF-2"/>
    <property type="match status" value="1"/>
</dbReference>
<dbReference type="NCBIfam" id="TIGR00231">
    <property type="entry name" value="small_GTP"/>
    <property type="match status" value="1"/>
</dbReference>
<dbReference type="PANTHER" id="PTHR43381:SF5">
    <property type="entry name" value="TR-TYPE G DOMAIN-CONTAINING PROTEIN"/>
    <property type="match status" value="1"/>
</dbReference>
<dbReference type="PANTHER" id="PTHR43381">
    <property type="entry name" value="TRANSLATION INITIATION FACTOR IF-2-RELATED"/>
    <property type="match status" value="1"/>
</dbReference>
<dbReference type="Pfam" id="PF22042">
    <property type="entry name" value="EF-G_D2"/>
    <property type="match status" value="1"/>
</dbReference>
<dbReference type="Pfam" id="PF00009">
    <property type="entry name" value="GTP_EFTU"/>
    <property type="match status" value="1"/>
</dbReference>
<dbReference type="Pfam" id="PF11987">
    <property type="entry name" value="IF-2"/>
    <property type="match status" value="1"/>
</dbReference>
<dbReference type="Pfam" id="PF08364">
    <property type="entry name" value="IF2_assoc"/>
    <property type="match status" value="1"/>
</dbReference>
<dbReference type="Pfam" id="PF04760">
    <property type="entry name" value="IF2_N"/>
    <property type="match status" value="1"/>
</dbReference>
<dbReference type="SUPFAM" id="SSF52156">
    <property type="entry name" value="Initiation factor IF2/eIF5b, domain 3"/>
    <property type="match status" value="1"/>
</dbReference>
<dbReference type="SUPFAM" id="SSF52540">
    <property type="entry name" value="P-loop containing nucleoside triphosphate hydrolases"/>
    <property type="match status" value="1"/>
</dbReference>
<dbReference type="SUPFAM" id="SSF50447">
    <property type="entry name" value="Translation proteins"/>
    <property type="match status" value="2"/>
</dbReference>
<dbReference type="PROSITE" id="PS51722">
    <property type="entry name" value="G_TR_2"/>
    <property type="match status" value="1"/>
</dbReference>
<proteinExistence type="inferred from homology"/>